<proteinExistence type="evidence at protein level"/>
<feature type="initiator methionine" description="Removed" evidence="6">
    <location>
        <position position="1"/>
    </location>
</feature>
<feature type="chain" id="PRO_0000061916" description="Cytochrome bc complex cytochrome b subunit">
    <location>
        <begin position="2"/>
        <end position="428"/>
    </location>
</feature>
<feature type="transmembrane region" description="Helical" evidence="2">
    <location>
        <begin position="110"/>
        <end position="130"/>
    </location>
</feature>
<feature type="transmembrane region" description="Helical" evidence="2">
    <location>
        <begin position="162"/>
        <end position="182"/>
    </location>
</feature>
<feature type="transmembrane region" description="Helical" evidence="2">
    <location>
        <begin position="193"/>
        <end position="213"/>
    </location>
</feature>
<feature type="transmembrane region" description="Helical" evidence="2">
    <location>
        <begin position="260"/>
        <end position="280"/>
    </location>
</feature>
<feature type="transmembrane region" description="Helical" evidence="2">
    <location>
        <begin position="312"/>
        <end position="331"/>
    </location>
</feature>
<feature type="transmembrane region" description="Helical" evidence="2">
    <location>
        <begin position="369"/>
        <end position="389"/>
    </location>
</feature>
<feature type="transmembrane region" description="Helical" evidence="2">
    <location>
        <begin position="401"/>
        <end position="421"/>
    </location>
</feature>
<feature type="region of interest" description="Disordered" evidence="5">
    <location>
        <begin position="1"/>
        <end position="72"/>
    </location>
</feature>
<feature type="compositionally biased region" description="Low complexity" evidence="5">
    <location>
        <begin position="1"/>
        <end position="15"/>
    </location>
</feature>
<feature type="compositionally biased region" description="Low complexity" evidence="5">
    <location>
        <begin position="21"/>
        <end position="52"/>
    </location>
</feature>
<feature type="compositionally biased region" description="Basic and acidic residues" evidence="5">
    <location>
        <begin position="59"/>
        <end position="72"/>
    </location>
</feature>
<feature type="binding site" description="axial binding residue" evidence="4">
    <location>
        <position position="161"/>
    </location>
    <ligand>
        <name>heme b</name>
        <dbReference type="ChEBI" id="CHEBI:60344"/>
        <label>b562</label>
    </ligand>
    <ligandPart>
        <name>Fe</name>
        <dbReference type="ChEBI" id="CHEBI:18248"/>
    </ligandPart>
</feature>
<feature type="binding site" description="axial binding residue" evidence="4">
    <location>
        <position position="175"/>
    </location>
    <ligand>
        <name>heme b</name>
        <dbReference type="ChEBI" id="CHEBI:60344"/>
        <label>b566</label>
    </ligand>
    <ligandPart>
        <name>Fe</name>
        <dbReference type="ChEBI" id="CHEBI:18248"/>
    </ligandPart>
</feature>
<feature type="binding site" description="axial binding residue" evidence="4">
    <location>
        <position position="261"/>
    </location>
    <ligand>
        <name>heme b</name>
        <dbReference type="ChEBI" id="CHEBI:60344"/>
        <label>b562</label>
    </ligand>
    <ligandPart>
        <name>Fe</name>
        <dbReference type="ChEBI" id="CHEBI:18248"/>
    </ligandPart>
</feature>
<feature type="binding site" description="axial binding residue" evidence="4">
    <location>
        <position position="276"/>
    </location>
    <ligand>
        <name>heme b</name>
        <dbReference type="ChEBI" id="CHEBI:60344"/>
        <label>b566</label>
    </ligand>
    <ligandPart>
        <name>Fe</name>
        <dbReference type="ChEBI" id="CHEBI:18248"/>
    </ligandPart>
</feature>
<evidence type="ECO:0000250" key="1"/>
<evidence type="ECO:0000255" key="2"/>
<evidence type="ECO:0000255" key="3">
    <source>
        <dbReference type="PROSITE-ProRule" id="PRU00967"/>
    </source>
</evidence>
<evidence type="ECO:0000255" key="4">
    <source>
        <dbReference type="PROSITE-ProRule" id="PRU00968"/>
    </source>
</evidence>
<evidence type="ECO:0000256" key="5">
    <source>
        <dbReference type="SAM" id="MobiDB-lite"/>
    </source>
</evidence>
<evidence type="ECO:0000269" key="6">
    <source ref="1"/>
</evidence>
<evidence type="ECO:0000305" key="7"/>
<organism>
    <name type="scientific">Chlorobaculum thiosulfatiphilum</name>
    <name type="common">Chlorobium limicola f.sp. thiosulfatophilum</name>
    <dbReference type="NCBI Taxonomy" id="115852"/>
    <lineage>
        <taxon>Bacteria</taxon>
        <taxon>Pseudomonadati</taxon>
        <taxon>Chlorobiota</taxon>
        <taxon>Chlorobiia</taxon>
        <taxon>Chlorobiales</taxon>
        <taxon>Chlorobiaceae</taxon>
        <taxon>Chlorobaculum</taxon>
    </lineage>
</organism>
<keyword id="KW-0997">Cell inner membrane</keyword>
<keyword id="KW-1003">Cell membrane</keyword>
<keyword id="KW-0903">Direct protein sequencing</keyword>
<keyword id="KW-0249">Electron transport</keyword>
<keyword id="KW-0349">Heme</keyword>
<keyword id="KW-0408">Iron</keyword>
<keyword id="KW-0472">Membrane</keyword>
<keyword id="KW-0479">Metal-binding</keyword>
<keyword id="KW-0679">Respiratory chain</keyword>
<keyword id="KW-0812">Transmembrane</keyword>
<keyword id="KW-1133">Transmembrane helix</keyword>
<keyword id="KW-0813">Transport</keyword>
<name>CYB6_CHLTI</name>
<dbReference type="EMBL" id="X73628">
    <property type="protein sequence ID" value="CAA52008.1"/>
    <property type="molecule type" value="Genomic_DNA"/>
</dbReference>
<dbReference type="PIR" id="S38461">
    <property type="entry name" value="S38461"/>
</dbReference>
<dbReference type="SMR" id="Q59297"/>
<dbReference type="GO" id="GO:0005886">
    <property type="term" value="C:plasma membrane"/>
    <property type="evidence" value="ECO:0007669"/>
    <property type="project" value="UniProtKB-SubCell"/>
</dbReference>
<dbReference type="GO" id="GO:0009055">
    <property type="term" value="F:electron transfer activity"/>
    <property type="evidence" value="ECO:0007669"/>
    <property type="project" value="InterPro"/>
</dbReference>
<dbReference type="GO" id="GO:0046872">
    <property type="term" value="F:metal ion binding"/>
    <property type="evidence" value="ECO:0007669"/>
    <property type="project" value="UniProtKB-KW"/>
</dbReference>
<dbReference type="GO" id="GO:0016491">
    <property type="term" value="F:oxidoreductase activity"/>
    <property type="evidence" value="ECO:0007669"/>
    <property type="project" value="InterPro"/>
</dbReference>
<dbReference type="GO" id="GO:0022904">
    <property type="term" value="P:respiratory electron transport chain"/>
    <property type="evidence" value="ECO:0007669"/>
    <property type="project" value="InterPro"/>
</dbReference>
<dbReference type="Gene3D" id="1.20.810.10">
    <property type="entry name" value="Cytochrome Bc1 Complex, Chain C"/>
    <property type="match status" value="1"/>
</dbReference>
<dbReference type="InterPro" id="IPR005798">
    <property type="entry name" value="Cyt_b/b6_C"/>
</dbReference>
<dbReference type="InterPro" id="IPR036150">
    <property type="entry name" value="Cyt_b/b6_C_sf"/>
</dbReference>
<dbReference type="InterPro" id="IPR005797">
    <property type="entry name" value="Cyt_b/b6_N"/>
</dbReference>
<dbReference type="InterPro" id="IPR027387">
    <property type="entry name" value="Cytb/b6-like_sf"/>
</dbReference>
<dbReference type="InterPro" id="IPR016174">
    <property type="entry name" value="Di-haem_cyt_TM"/>
</dbReference>
<dbReference type="PANTHER" id="PTHR19271">
    <property type="entry name" value="CYTOCHROME B"/>
    <property type="match status" value="1"/>
</dbReference>
<dbReference type="PANTHER" id="PTHR19271:SF16">
    <property type="entry name" value="CYTOCHROME B"/>
    <property type="match status" value="1"/>
</dbReference>
<dbReference type="Pfam" id="PF00032">
    <property type="entry name" value="Cytochrom_B_C"/>
    <property type="match status" value="1"/>
</dbReference>
<dbReference type="Pfam" id="PF00033">
    <property type="entry name" value="Cytochrome_B"/>
    <property type="match status" value="1"/>
</dbReference>
<dbReference type="SUPFAM" id="SSF81648">
    <property type="entry name" value="a domain/subunit of cytochrome bc1 complex (Ubiquinol-cytochrome c reductase)"/>
    <property type="match status" value="1"/>
</dbReference>
<dbReference type="SUPFAM" id="SSF81342">
    <property type="entry name" value="Transmembrane di-heme cytochromes"/>
    <property type="match status" value="1"/>
</dbReference>
<dbReference type="PROSITE" id="PS51003">
    <property type="entry name" value="CYTB_CTER"/>
    <property type="match status" value="1"/>
</dbReference>
<dbReference type="PROSITE" id="PS51002">
    <property type="entry name" value="CYTB_NTER"/>
    <property type="match status" value="1"/>
</dbReference>
<accession>Q59297</accession>
<comment type="function">
    <text>Component of the green S-bacteria bc complex, which consists of the Rieske protein and cytochrome b subunit but appears to lack a cytochrome c1-equivalent. This complex has a comparatively low redox potential.</text>
</comment>
<comment type="cofactor">
    <cofactor evidence="1">
        <name>heme b</name>
        <dbReference type="ChEBI" id="CHEBI:60344"/>
    </cofactor>
    <text evidence="1">Binds 2 heme b groups non-covalently.</text>
</comment>
<comment type="subcellular location">
    <subcellularLocation>
        <location evidence="7">Cell inner membrane</location>
        <topology evidence="7">Multi-pass membrane protein</topology>
    </subcellularLocation>
</comment>
<comment type="miscellaneous">
    <text evidence="1">Heme 1 (or BL or b562) is low-potential and absorbs at about 562 nm, and heme 2 (or BH or b566) is high-potential and absorbs at about 566 nm.</text>
</comment>
<comment type="similarity">
    <text evidence="3 4">Belongs to the cytochrome b family.</text>
</comment>
<reference key="1">
    <citation type="journal article" date="1994" name="Photosyn. Res.">
        <title>A transcription unit for the Rieske FeS-protein and cytochrome b in Chlorobium limicola.</title>
        <authorList>
            <person name="Schuetz M."/>
            <person name="Zirngibl S."/>
            <person name="le Coutre J."/>
            <person name="Buettner M."/>
            <person name="Xie D.-L."/>
            <person name="Nelson N."/>
            <person name="Deutzmann R."/>
            <person name="Hauska G."/>
        </authorList>
    </citation>
    <scope>NUCLEOTIDE SEQUENCE [GENOMIC DNA]</scope>
    <scope>PROTEIN SEQUENCE OF 2-25</scope>
</reference>
<protein>
    <recommendedName>
        <fullName>Cytochrome bc complex cytochrome b subunit</fullName>
    </recommendedName>
</protein>
<gene>
    <name type="primary">petB</name>
</gene>
<sequence length="428" mass="47477">MAENTPKPAAGTAPAKPKPAAPGAAKPAAPKAARPGAAKPAAKPAAPRAAAPSGVYKKPPVDRPDPNPFKDSKRDAVAGWFQERFYVLNPIIDYLKHKEVPKHALSFWYYFGGLGLFFFVIQILTGLLLLQYYKPTETDAFASFLFIQGEVPFGWLLRQIHAWSANLMIMMLFIHMFSTFFMKSYRKPRELMWVSGFVLLLLSLGFGFTGYLLPWNELAFFATQVGTEVPKVAPGGAFLVEILRGGPEVGGETLTRMFSLHVVLLPGLVMLVLAAHLTLVQILGTSAPIGYKEAGLIKGYDKFFPTFLAKDGIGWLIGFALLIYLAVMFPWEIGVKANPLSPAPLGIKPEWYFWAQFQLLKDFKFEGGELLAIILFTIGGVVWLLVPFIDRQASEEKKSPIFTIFGILVLAFLLINTYRVYAEYSMLK</sequence>